<name>ALL5_HEVBR</name>
<sequence>MASVEVESAATALPKNETPEVTKAEETKTEEPAAPPASEQETADATPEKEEPTAAPAEPEAPAPETEKAEEVEKIEKTEEPAPEADQTTPEEKPAEPEPVAEEEPKHETKETETEAPAAPAEGEKPAEEEKPITEAAETATTEVPVEKTEE</sequence>
<comment type="PTM">
    <text>The N-terminus is blocked.</text>
</comment>
<comment type="mass spectrometry"/>
<comment type="allergen">
    <text>Causes an allergic reaction in human. Major latex allergen, a major cause of anaphylaxis in susceptible individuals, especially health care workers. 92% of health care workers with latex allergy have IgE specific to the Hev b 5 protein.</text>
</comment>
<comment type="similarity">
    <text evidence="4">To kiwi fruit protein PKIWI501.</text>
</comment>
<accession>Q39967</accession>
<keyword id="KW-0007">Acetylation</keyword>
<keyword id="KW-0020">Allergen</keyword>
<keyword id="KW-0903">Direct protein sequencing</keyword>
<proteinExistence type="evidence at protein level"/>
<organism>
    <name type="scientific">Hevea brasiliensis</name>
    <name type="common">Para rubber tree</name>
    <name type="synonym">Siphonia brasiliensis</name>
    <dbReference type="NCBI Taxonomy" id="3981"/>
    <lineage>
        <taxon>Eukaryota</taxon>
        <taxon>Viridiplantae</taxon>
        <taxon>Streptophyta</taxon>
        <taxon>Embryophyta</taxon>
        <taxon>Tracheophyta</taxon>
        <taxon>Spermatophyta</taxon>
        <taxon>Magnoliopsida</taxon>
        <taxon>eudicotyledons</taxon>
        <taxon>Gunneridae</taxon>
        <taxon>Pentapetalae</taxon>
        <taxon>rosids</taxon>
        <taxon>fabids</taxon>
        <taxon>Malpighiales</taxon>
        <taxon>Euphorbiaceae</taxon>
        <taxon>Crotonoideae</taxon>
        <taxon>Micrandreae</taxon>
        <taxon>Hevea</taxon>
    </lineage>
</organism>
<feature type="initiator methionine" description="Removed" evidence="1">
    <location>
        <position position="1"/>
    </location>
</feature>
<feature type="chain" id="PRO_0000064561" description="Major latex allergen Hev b 5">
    <location>
        <begin position="2"/>
        <end position="151"/>
    </location>
</feature>
<feature type="region of interest" description="Disordered" evidence="2">
    <location>
        <begin position="1"/>
        <end position="151"/>
    </location>
</feature>
<feature type="compositionally biased region" description="Basic and acidic residues" evidence="2">
    <location>
        <begin position="17"/>
        <end position="31"/>
    </location>
</feature>
<feature type="compositionally biased region" description="Low complexity" evidence="2">
    <location>
        <begin position="36"/>
        <end position="45"/>
    </location>
</feature>
<feature type="compositionally biased region" description="Low complexity" evidence="2">
    <location>
        <begin position="53"/>
        <end position="64"/>
    </location>
</feature>
<feature type="compositionally biased region" description="Basic and acidic residues" evidence="2">
    <location>
        <begin position="65"/>
        <end position="80"/>
    </location>
</feature>
<feature type="compositionally biased region" description="Basic and acidic residues" evidence="2">
    <location>
        <begin position="103"/>
        <end position="113"/>
    </location>
</feature>
<feature type="compositionally biased region" description="Basic and acidic residues" evidence="2">
    <location>
        <begin position="122"/>
        <end position="133"/>
    </location>
</feature>
<feature type="compositionally biased region" description="Low complexity" evidence="2">
    <location>
        <begin position="134"/>
        <end position="144"/>
    </location>
</feature>
<feature type="modified residue" description="N-acetylalanine" evidence="1">
    <location>
        <position position="2"/>
    </location>
</feature>
<evidence type="ECO:0000255" key="1"/>
<evidence type="ECO:0000256" key="2">
    <source>
        <dbReference type="SAM" id="MobiDB-lite"/>
    </source>
</evidence>
<evidence type="ECO:0000269" key="3">
    <source>
    </source>
</evidence>
<evidence type="ECO:0000305" key="4"/>
<dbReference type="EMBL" id="U42640">
    <property type="protein sequence ID" value="AAC49447.1"/>
    <property type="molecule type" value="mRNA"/>
</dbReference>
<dbReference type="EMBL" id="U51631">
    <property type="protein sequence ID" value="AAC49448.1"/>
    <property type="molecule type" value="mRNA"/>
</dbReference>
<dbReference type="PIR" id="T10768">
    <property type="entry name" value="T10768"/>
</dbReference>
<dbReference type="RefSeq" id="NP_001392246.1">
    <property type="nucleotide sequence ID" value="NM_001405317.1"/>
</dbReference>
<dbReference type="Allergome" id="3316">
    <property type="allergen name" value="Hev b 5.0101"/>
</dbReference>
<dbReference type="Allergome" id="389">
    <property type="allergen name" value="Hev b 5"/>
</dbReference>
<dbReference type="GeneID" id="110635644"/>
<reference key="1">
    <citation type="journal article" date="1996" name="J. Biol. Chem.">
        <title>Identification, cloning, and sequence of a major allergen (Hev b 5) from natural rubber latex (Hevea brasiliensis).</title>
        <authorList>
            <person name="Slater J.E."/>
            <person name="Vedvick T."/>
            <person name="Arthur-Smith A."/>
            <person name="Trybul D.E."/>
            <person name="Kekwick R.G.O."/>
        </authorList>
    </citation>
    <scope>NUCLEOTIDE SEQUENCE [MRNA]</scope>
    <source>
        <strain>cv. RRIM 600</strain>
        <tissue>Latex</tissue>
    </source>
</reference>
<reference key="2">
    <citation type="journal article" date="1996" name="J. Biol. Chem.">
        <title>A novel acidic allergen, Hev b 5, in latex. Purification, cloning and characterization.</title>
        <authorList>
            <person name="Akasawa A."/>
            <person name="Hsieh L.-S."/>
            <person name="Martin B.M."/>
            <person name="Liu T."/>
            <person name="Lin Y."/>
        </authorList>
    </citation>
    <scope>NUCLEOTIDE SEQUENCE [MRNA]</scope>
    <scope>PARTIAL PROTEIN SEQUENCE</scope>
    <scope>MASS SPECTROMETRY</scope>
    <source>
        <strain>cv. RRIM 600</strain>
        <tissue>Latex</tissue>
    </source>
</reference>
<protein>
    <recommendedName>
        <fullName>Major latex allergen Hev b 5</fullName>
    </recommendedName>
    <allergenName>Hev b 5</allergenName>
</protein>